<proteinExistence type="inferred from homology"/>
<reference key="1">
    <citation type="submission" date="2006-12" db="EMBL/GenBank/DDBJ databases">
        <authorList>
            <person name="Hendrix L."/>
            <person name="Mohamoud Y."/>
            <person name="Radune D."/>
            <person name="Shvartsbeyn A."/>
            <person name="Daugherty S."/>
            <person name="Dodson R."/>
            <person name="Durkin A.S."/>
            <person name="Harkins D."/>
            <person name="Huot H."/>
            <person name="Kothari S.P."/>
            <person name="Madupu R."/>
            <person name="Li J."/>
            <person name="Nelson W.C."/>
            <person name="Shrivastava S."/>
            <person name="Giglio M.G."/>
            <person name="Haft D."/>
            <person name="Selengut J."/>
            <person name="Fraser-Ligget C."/>
            <person name="Seshadri R."/>
        </authorList>
    </citation>
    <scope>NUCLEOTIDE SEQUENCE [LARGE SCALE GENOMIC DNA]</scope>
    <source>
        <strain>ATCC 35685 / KC583 / Herrer 020/F12,63</strain>
    </source>
</reference>
<sequence>MARKYFGTDGIRGKANIFPMTPDFAMKVGIAVGVLFRSKATSRRVVIGKDTRLSCYMLENALVAGFTAAGMDAFLLGPIPTPAVAMLCRSLRADIGVMISASHNAFYDNGIKLFGPDGFKLSDEKETKIEALLDSDISELPLANCEEIGRAKRVEGDIYRYIEYAKRTLPRDVRLDALRIVVDCANGATYKAAPRALWELGAEVIAINDEPNGFNINQECGSTDLTSLRNKVHEVRADVGIALDGDGDRVLMVDEKGQMIDGDQLIAVIAEHWHKTGRLHHKGIVTTVMSNLGLERFLSEKGLKLIRTDVGDRYVVDMMRQKKYNIGGESSGHIILSDFCTTGDGLVAALQVLACMKESQQPMSQLCKRFEPVPQILKNKVVHNKNVLQKSEVQAALTKASEHLGKEGRLLVRASGTEPVIRVMAEGDDRKAMTAIVDDLITLIARHDHD</sequence>
<name>GLMM_BARBK</name>
<evidence type="ECO:0000255" key="1">
    <source>
        <dbReference type="HAMAP-Rule" id="MF_01554"/>
    </source>
</evidence>
<dbReference type="EC" id="5.4.2.10" evidence="1"/>
<dbReference type="EMBL" id="CP000524">
    <property type="protein sequence ID" value="ABM45449.1"/>
    <property type="molecule type" value="Genomic_DNA"/>
</dbReference>
<dbReference type="RefSeq" id="WP_005765980.1">
    <property type="nucleotide sequence ID" value="NC_008783.1"/>
</dbReference>
<dbReference type="SMR" id="A1URA6"/>
<dbReference type="STRING" id="360095.BARBAKC583_0171"/>
<dbReference type="GeneID" id="4683927"/>
<dbReference type="KEGG" id="bbk:BARBAKC583_0171"/>
<dbReference type="PATRIC" id="fig|360095.6.peg.169"/>
<dbReference type="eggNOG" id="COG1109">
    <property type="taxonomic scope" value="Bacteria"/>
</dbReference>
<dbReference type="HOGENOM" id="CLU_016950_7_0_5"/>
<dbReference type="OrthoDB" id="9803322at2"/>
<dbReference type="Proteomes" id="UP000000643">
    <property type="component" value="Chromosome"/>
</dbReference>
<dbReference type="GO" id="GO:0005829">
    <property type="term" value="C:cytosol"/>
    <property type="evidence" value="ECO:0007669"/>
    <property type="project" value="TreeGrafter"/>
</dbReference>
<dbReference type="GO" id="GO:0000287">
    <property type="term" value="F:magnesium ion binding"/>
    <property type="evidence" value="ECO:0007669"/>
    <property type="project" value="UniProtKB-UniRule"/>
</dbReference>
<dbReference type="GO" id="GO:0008966">
    <property type="term" value="F:phosphoglucosamine mutase activity"/>
    <property type="evidence" value="ECO:0007669"/>
    <property type="project" value="UniProtKB-UniRule"/>
</dbReference>
<dbReference type="GO" id="GO:0004615">
    <property type="term" value="F:phosphomannomutase activity"/>
    <property type="evidence" value="ECO:0007669"/>
    <property type="project" value="TreeGrafter"/>
</dbReference>
<dbReference type="GO" id="GO:0005975">
    <property type="term" value="P:carbohydrate metabolic process"/>
    <property type="evidence" value="ECO:0007669"/>
    <property type="project" value="InterPro"/>
</dbReference>
<dbReference type="GO" id="GO:0009252">
    <property type="term" value="P:peptidoglycan biosynthetic process"/>
    <property type="evidence" value="ECO:0007669"/>
    <property type="project" value="TreeGrafter"/>
</dbReference>
<dbReference type="GO" id="GO:0006048">
    <property type="term" value="P:UDP-N-acetylglucosamine biosynthetic process"/>
    <property type="evidence" value="ECO:0007669"/>
    <property type="project" value="TreeGrafter"/>
</dbReference>
<dbReference type="CDD" id="cd05802">
    <property type="entry name" value="GlmM"/>
    <property type="match status" value="1"/>
</dbReference>
<dbReference type="FunFam" id="3.40.120.10:FF:000001">
    <property type="entry name" value="Phosphoglucosamine mutase"/>
    <property type="match status" value="1"/>
</dbReference>
<dbReference type="FunFam" id="3.40.120.10:FF:000003">
    <property type="entry name" value="Phosphoglucosamine mutase"/>
    <property type="match status" value="1"/>
</dbReference>
<dbReference type="Gene3D" id="3.40.120.10">
    <property type="entry name" value="Alpha-D-Glucose-1,6-Bisphosphate, subunit A, domain 3"/>
    <property type="match status" value="3"/>
</dbReference>
<dbReference type="Gene3D" id="3.30.310.50">
    <property type="entry name" value="Alpha-D-phosphohexomutase, C-terminal domain"/>
    <property type="match status" value="1"/>
</dbReference>
<dbReference type="HAMAP" id="MF_01554_B">
    <property type="entry name" value="GlmM_B"/>
    <property type="match status" value="1"/>
</dbReference>
<dbReference type="InterPro" id="IPR005844">
    <property type="entry name" value="A-D-PHexomutase_a/b/a-I"/>
</dbReference>
<dbReference type="InterPro" id="IPR016055">
    <property type="entry name" value="A-D-PHexomutase_a/b/a-I/II/III"/>
</dbReference>
<dbReference type="InterPro" id="IPR005845">
    <property type="entry name" value="A-D-PHexomutase_a/b/a-II"/>
</dbReference>
<dbReference type="InterPro" id="IPR005846">
    <property type="entry name" value="A-D-PHexomutase_a/b/a-III"/>
</dbReference>
<dbReference type="InterPro" id="IPR005843">
    <property type="entry name" value="A-D-PHexomutase_C"/>
</dbReference>
<dbReference type="InterPro" id="IPR036900">
    <property type="entry name" value="A-D-PHexomutase_C_sf"/>
</dbReference>
<dbReference type="InterPro" id="IPR005841">
    <property type="entry name" value="Alpha-D-phosphohexomutase_SF"/>
</dbReference>
<dbReference type="InterPro" id="IPR006352">
    <property type="entry name" value="GlmM_bact"/>
</dbReference>
<dbReference type="InterPro" id="IPR050060">
    <property type="entry name" value="Phosphoglucosamine_mutase"/>
</dbReference>
<dbReference type="NCBIfam" id="TIGR01455">
    <property type="entry name" value="glmM"/>
    <property type="match status" value="1"/>
</dbReference>
<dbReference type="NCBIfam" id="NF008139">
    <property type="entry name" value="PRK10887.1"/>
    <property type="match status" value="1"/>
</dbReference>
<dbReference type="PANTHER" id="PTHR42946:SF1">
    <property type="entry name" value="PHOSPHOGLUCOMUTASE (ALPHA-D-GLUCOSE-1,6-BISPHOSPHATE-DEPENDENT)"/>
    <property type="match status" value="1"/>
</dbReference>
<dbReference type="PANTHER" id="PTHR42946">
    <property type="entry name" value="PHOSPHOHEXOSE MUTASE"/>
    <property type="match status" value="1"/>
</dbReference>
<dbReference type="Pfam" id="PF02878">
    <property type="entry name" value="PGM_PMM_I"/>
    <property type="match status" value="1"/>
</dbReference>
<dbReference type="Pfam" id="PF02879">
    <property type="entry name" value="PGM_PMM_II"/>
    <property type="match status" value="1"/>
</dbReference>
<dbReference type="Pfam" id="PF02880">
    <property type="entry name" value="PGM_PMM_III"/>
    <property type="match status" value="1"/>
</dbReference>
<dbReference type="Pfam" id="PF00408">
    <property type="entry name" value="PGM_PMM_IV"/>
    <property type="match status" value="1"/>
</dbReference>
<dbReference type="PRINTS" id="PR00509">
    <property type="entry name" value="PGMPMM"/>
</dbReference>
<dbReference type="SUPFAM" id="SSF55957">
    <property type="entry name" value="Phosphoglucomutase, C-terminal domain"/>
    <property type="match status" value="1"/>
</dbReference>
<dbReference type="SUPFAM" id="SSF53738">
    <property type="entry name" value="Phosphoglucomutase, first 3 domains"/>
    <property type="match status" value="3"/>
</dbReference>
<comment type="function">
    <text evidence="1">Catalyzes the conversion of glucosamine-6-phosphate to glucosamine-1-phosphate.</text>
</comment>
<comment type="catalytic activity">
    <reaction evidence="1">
        <text>alpha-D-glucosamine 1-phosphate = D-glucosamine 6-phosphate</text>
        <dbReference type="Rhea" id="RHEA:23424"/>
        <dbReference type="ChEBI" id="CHEBI:58516"/>
        <dbReference type="ChEBI" id="CHEBI:58725"/>
        <dbReference type="EC" id="5.4.2.10"/>
    </reaction>
</comment>
<comment type="cofactor">
    <cofactor evidence="1">
        <name>Mg(2+)</name>
        <dbReference type="ChEBI" id="CHEBI:18420"/>
    </cofactor>
    <text evidence="1">Binds 1 Mg(2+) ion per subunit.</text>
</comment>
<comment type="PTM">
    <text evidence="1">Activated by phosphorylation.</text>
</comment>
<comment type="similarity">
    <text evidence="1">Belongs to the phosphohexose mutase family.</text>
</comment>
<feature type="chain" id="PRO_0000301280" description="Phosphoglucosamine mutase">
    <location>
        <begin position="1"/>
        <end position="450"/>
    </location>
</feature>
<feature type="active site" description="Phosphoserine intermediate" evidence="1">
    <location>
        <position position="102"/>
    </location>
</feature>
<feature type="binding site" description="via phosphate group" evidence="1">
    <location>
        <position position="102"/>
    </location>
    <ligand>
        <name>Mg(2+)</name>
        <dbReference type="ChEBI" id="CHEBI:18420"/>
    </ligand>
</feature>
<feature type="binding site" evidence="1">
    <location>
        <position position="244"/>
    </location>
    <ligand>
        <name>Mg(2+)</name>
        <dbReference type="ChEBI" id="CHEBI:18420"/>
    </ligand>
</feature>
<feature type="binding site" evidence="1">
    <location>
        <position position="246"/>
    </location>
    <ligand>
        <name>Mg(2+)</name>
        <dbReference type="ChEBI" id="CHEBI:18420"/>
    </ligand>
</feature>
<feature type="binding site" evidence="1">
    <location>
        <position position="248"/>
    </location>
    <ligand>
        <name>Mg(2+)</name>
        <dbReference type="ChEBI" id="CHEBI:18420"/>
    </ligand>
</feature>
<feature type="modified residue" description="Phosphoserine" evidence="1">
    <location>
        <position position="102"/>
    </location>
</feature>
<organism>
    <name type="scientific">Bartonella bacilliformis (strain ATCC 35685 / KC583 / Herrer 020/F12,63)</name>
    <dbReference type="NCBI Taxonomy" id="360095"/>
    <lineage>
        <taxon>Bacteria</taxon>
        <taxon>Pseudomonadati</taxon>
        <taxon>Pseudomonadota</taxon>
        <taxon>Alphaproteobacteria</taxon>
        <taxon>Hyphomicrobiales</taxon>
        <taxon>Bartonellaceae</taxon>
        <taxon>Bartonella</taxon>
    </lineage>
</organism>
<accession>A1URA6</accession>
<gene>
    <name evidence="1" type="primary">glmM</name>
    <name type="ordered locus">BARBAKC583_0171</name>
</gene>
<keyword id="KW-0413">Isomerase</keyword>
<keyword id="KW-0460">Magnesium</keyword>
<keyword id="KW-0479">Metal-binding</keyword>
<keyword id="KW-0597">Phosphoprotein</keyword>
<protein>
    <recommendedName>
        <fullName evidence="1">Phosphoglucosamine mutase</fullName>
        <ecNumber evidence="1">5.4.2.10</ecNumber>
    </recommendedName>
</protein>